<keyword id="KW-0131">Cell cycle</keyword>
<keyword id="KW-0132">Cell division</keyword>
<keyword id="KW-0574">Periplasm</keyword>
<keyword id="KW-0732">Signal</keyword>
<dbReference type="EMBL" id="BX572596">
    <property type="protein sequence ID" value="CAE26563.1"/>
    <property type="molecule type" value="Genomic_DNA"/>
</dbReference>
<dbReference type="RefSeq" id="WP_011156684.1">
    <property type="nucleotide sequence ID" value="NZ_CP116810.1"/>
</dbReference>
<dbReference type="SMR" id="Q6NAR1"/>
<dbReference type="STRING" id="258594.RPA1120"/>
<dbReference type="GeneID" id="66892141"/>
<dbReference type="eggNOG" id="COG0823">
    <property type="taxonomic scope" value="Bacteria"/>
</dbReference>
<dbReference type="HOGENOM" id="CLU_047123_0_0_5"/>
<dbReference type="PhylomeDB" id="Q6NAR1"/>
<dbReference type="GO" id="GO:0042597">
    <property type="term" value="C:periplasmic space"/>
    <property type="evidence" value="ECO:0007669"/>
    <property type="project" value="UniProtKB-SubCell"/>
</dbReference>
<dbReference type="GO" id="GO:0051301">
    <property type="term" value="P:cell division"/>
    <property type="evidence" value="ECO:0007669"/>
    <property type="project" value="UniProtKB-UniRule"/>
</dbReference>
<dbReference type="GO" id="GO:0017038">
    <property type="term" value="P:protein import"/>
    <property type="evidence" value="ECO:0007669"/>
    <property type="project" value="InterPro"/>
</dbReference>
<dbReference type="Gene3D" id="2.120.10.30">
    <property type="entry name" value="TolB, C-terminal domain"/>
    <property type="match status" value="1"/>
</dbReference>
<dbReference type="Gene3D" id="3.40.50.10070">
    <property type="entry name" value="TolB, N-terminal domain"/>
    <property type="match status" value="1"/>
</dbReference>
<dbReference type="HAMAP" id="MF_00671">
    <property type="entry name" value="TolB"/>
    <property type="match status" value="1"/>
</dbReference>
<dbReference type="InterPro" id="IPR011042">
    <property type="entry name" value="6-blade_b-propeller_TolB-like"/>
</dbReference>
<dbReference type="InterPro" id="IPR011659">
    <property type="entry name" value="PD40"/>
</dbReference>
<dbReference type="InterPro" id="IPR006311">
    <property type="entry name" value="TAT_signal"/>
</dbReference>
<dbReference type="InterPro" id="IPR014167">
    <property type="entry name" value="Tol-Pal_TolB"/>
</dbReference>
<dbReference type="InterPro" id="IPR007195">
    <property type="entry name" value="TolB_N"/>
</dbReference>
<dbReference type="NCBIfam" id="TIGR02800">
    <property type="entry name" value="propeller_TolB"/>
    <property type="match status" value="1"/>
</dbReference>
<dbReference type="PANTHER" id="PTHR36842:SF1">
    <property type="entry name" value="PROTEIN TOLB"/>
    <property type="match status" value="1"/>
</dbReference>
<dbReference type="PANTHER" id="PTHR36842">
    <property type="entry name" value="PROTEIN TOLB HOMOLOG"/>
    <property type="match status" value="1"/>
</dbReference>
<dbReference type="Pfam" id="PF07676">
    <property type="entry name" value="PD40"/>
    <property type="match status" value="3"/>
</dbReference>
<dbReference type="Pfam" id="PF04052">
    <property type="entry name" value="TolB_N"/>
    <property type="match status" value="1"/>
</dbReference>
<dbReference type="SUPFAM" id="SSF52964">
    <property type="entry name" value="TolB, N-terminal domain"/>
    <property type="match status" value="1"/>
</dbReference>
<dbReference type="SUPFAM" id="SSF69304">
    <property type="entry name" value="Tricorn protease N-terminal domain"/>
    <property type="match status" value="1"/>
</dbReference>
<dbReference type="PROSITE" id="PS51318">
    <property type="entry name" value="TAT"/>
    <property type="match status" value="1"/>
</dbReference>
<protein>
    <recommendedName>
        <fullName evidence="1">Tol-Pal system protein TolB</fullName>
    </recommendedName>
</protein>
<feature type="signal peptide" evidence="1">
    <location>
        <begin position="1"/>
        <end position="31"/>
    </location>
</feature>
<feature type="chain" id="PRO_0000034679" description="Tol-Pal system protein TolB" evidence="1">
    <location>
        <begin position="32"/>
        <end position="444"/>
    </location>
</feature>
<comment type="function">
    <text evidence="1">Part of the Tol-Pal system, which plays a role in outer membrane invagination during cell division and is important for maintaining outer membrane integrity.</text>
</comment>
<comment type="subunit">
    <text evidence="1">The Tol-Pal system is composed of five core proteins: the inner membrane proteins TolA, TolQ and TolR, the periplasmic protein TolB and the outer membrane protein Pal. They form a network linking the inner and outer membranes and the peptidoglycan layer.</text>
</comment>
<comment type="subcellular location">
    <subcellularLocation>
        <location evidence="1">Periplasm</location>
    </subcellularLocation>
</comment>
<comment type="similarity">
    <text evidence="1">Belongs to the TolB family.</text>
</comment>
<gene>
    <name evidence="1" type="primary">tolB</name>
    <name type="ordered locus">RPA1120</name>
</gene>
<reference key="1">
    <citation type="journal article" date="2004" name="Nat. Biotechnol.">
        <title>Complete genome sequence of the metabolically versatile photosynthetic bacterium Rhodopseudomonas palustris.</title>
        <authorList>
            <person name="Larimer F.W."/>
            <person name="Chain P."/>
            <person name="Hauser L."/>
            <person name="Lamerdin J.E."/>
            <person name="Malfatti S."/>
            <person name="Do L."/>
            <person name="Land M.L."/>
            <person name="Pelletier D.A."/>
            <person name="Beatty J.T."/>
            <person name="Lang A.S."/>
            <person name="Tabita F.R."/>
            <person name="Gibson J.L."/>
            <person name="Hanson T.E."/>
            <person name="Bobst C."/>
            <person name="Torres y Torres J.L."/>
            <person name="Peres C."/>
            <person name="Harrison F.H."/>
            <person name="Gibson J."/>
            <person name="Harwood C.S."/>
        </authorList>
    </citation>
    <scope>NUCLEOTIDE SEQUENCE [LARGE SCALE GENOMIC DNA]</scope>
    <source>
        <strain>ATCC BAA-98 / CGA009</strain>
    </source>
</reference>
<name>TOLB_RHOPA</name>
<organism>
    <name type="scientific">Rhodopseudomonas palustris (strain ATCC BAA-98 / CGA009)</name>
    <dbReference type="NCBI Taxonomy" id="258594"/>
    <lineage>
        <taxon>Bacteria</taxon>
        <taxon>Pseudomonadati</taxon>
        <taxon>Pseudomonadota</taxon>
        <taxon>Alphaproteobacteria</taxon>
        <taxon>Hyphomicrobiales</taxon>
        <taxon>Nitrobacteraceae</taxon>
        <taxon>Rhodopseudomonas</taxon>
    </lineage>
</organism>
<evidence type="ECO:0000255" key="1">
    <source>
        <dbReference type="HAMAP-Rule" id="MF_00671"/>
    </source>
</evidence>
<proteinExistence type="inferred from homology"/>
<accession>Q6NAR1</accession>
<sequence>MSFDLNRRQLMISAATAAGALALGPARDAFGQARVQITEGNVAPLPIAIPNFVAGTPSDAEVGTGVSQVITNNLKRSGLFAPIDQAAYLEKITNIDVPPQFKSWASINAQALVTGRMTRQGDGRLKAEFRLWDVATGQQLAGQQYFTSPEYWRRIAHIISDQIYERLTGEKGYFDSRVVFIDESGPADRRVKRLALMDQDGANVRYLTRGSDLVLTPRFSPTNQEITYMEFGQGEPRVYLFNVETGQREIVGNFPGMSFAPRFSPDGQRIIMSLQQGGNSNLFVMDLRSKATTRLTDTPAIDTSPSYAPDGSRICFESDRGGKPQIYIMPASGGQAQRISFGDGSYSTPVWSPRGDYIAFTKQGGGQFAIGIMKPDGSGERILTSGFHNEGPTFAPNGRVLMFFRDPGGNAGPSLFTVDVSGRNELRVPTPGYASDPAWSPLLS</sequence>